<feature type="chain" id="PRO_0000319220" description="Formate-dependent phosphoribosylglycinamide formyltransferase">
    <location>
        <begin position="1"/>
        <end position="401"/>
    </location>
</feature>
<feature type="domain" description="ATP-grasp" evidence="1">
    <location>
        <begin position="120"/>
        <end position="315"/>
    </location>
</feature>
<feature type="binding site" evidence="1">
    <location>
        <begin position="22"/>
        <end position="23"/>
    </location>
    <ligand>
        <name>N(1)-(5-phospho-beta-D-ribosyl)glycinamide</name>
        <dbReference type="ChEBI" id="CHEBI:143788"/>
    </ligand>
</feature>
<feature type="binding site" evidence="1">
    <location>
        <position position="82"/>
    </location>
    <ligand>
        <name>N(1)-(5-phospho-beta-D-ribosyl)glycinamide</name>
        <dbReference type="ChEBI" id="CHEBI:143788"/>
    </ligand>
</feature>
<feature type="binding site" evidence="1">
    <location>
        <position position="115"/>
    </location>
    <ligand>
        <name>ATP</name>
        <dbReference type="ChEBI" id="CHEBI:30616"/>
    </ligand>
</feature>
<feature type="binding site" evidence="1">
    <location>
        <position position="157"/>
    </location>
    <ligand>
        <name>ATP</name>
        <dbReference type="ChEBI" id="CHEBI:30616"/>
    </ligand>
</feature>
<feature type="binding site" evidence="1">
    <location>
        <begin position="162"/>
        <end position="167"/>
    </location>
    <ligand>
        <name>ATP</name>
        <dbReference type="ChEBI" id="CHEBI:30616"/>
    </ligand>
</feature>
<feature type="binding site" evidence="1">
    <location>
        <begin position="197"/>
        <end position="200"/>
    </location>
    <ligand>
        <name>ATP</name>
        <dbReference type="ChEBI" id="CHEBI:30616"/>
    </ligand>
</feature>
<feature type="binding site" evidence="1">
    <location>
        <position position="205"/>
    </location>
    <ligand>
        <name>ATP</name>
        <dbReference type="ChEBI" id="CHEBI:30616"/>
    </ligand>
</feature>
<feature type="binding site" evidence="1">
    <location>
        <position position="274"/>
    </location>
    <ligand>
        <name>Mg(2+)</name>
        <dbReference type="ChEBI" id="CHEBI:18420"/>
    </ligand>
</feature>
<feature type="binding site" evidence="1">
    <location>
        <position position="286"/>
    </location>
    <ligand>
        <name>Mg(2+)</name>
        <dbReference type="ChEBI" id="CHEBI:18420"/>
    </ligand>
</feature>
<feature type="binding site" evidence="1">
    <location>
        <position position="293"/>
    </location>
    <ligand>
        <name>N(1)-(5-phospho-beta-D-ribosyl)glycinamide</name>
        <dbReference type="ChEBI" id="CHEBI:143788"/>
    </ligand>
</feature>
<feature type="binding site" evidence="1">
    <location>
        <position position="362"/>
    </location>
    <ligand>
        <name>N(1)-(5-phospho-beta-D-ribosyl)glycinamide</name>
        <dbReference type="ChEBI" id="CHEBI:143788"/>
    </ligand>
</feature>
<feature type="binding site" evidence="1">
    <location>
        <begin position="369"/>
        <end position="370"/>
    </location>
    <ligand>
        <name>N(1)-(5-phospho-beta-D-ribosyl)glycinamide</name>
        <dbReference type="ChEBI" id="CHEBI:143788"/>
    </ligand>
</feature>
<reference key="1">
    <citation type="journal article" date="2010" name="PLoS ONE">
        <title>The complete multipartite genome sequence of Cupriavidus necator JMP134, a versatile pollutant degrader.</title>
        <authorList>
            <person name="Lykidis A."/>
            <person name="Perez-Pantoja D."/>
            <person name="Ledger T."/>
            <person name="Mavromatis K."/>
            <person name="Anderson I.J."/>
            <person name="Ivanova N.N."/>
            <person name="Hooper S.D."/>
            <person name="Lapidus A."/>
            <person name="Lucas S."/>
            <person name="Gonzalez B."/>
            <person name="Kyrpides N.C."/>
        </authorList>
    </citation>
    <scope>NUCLEOTIDE SEQUENCE [LARGE SCALE GENOMIC DNA]</scope>
    <source>
        <strain>JMP134 / LMG 1197</strain>
    </source>
</reference>
<dbReference type="EC" id="6.3.1.21" evidence="1"/>
<dbReference type="EMBL" id="CP000090">
    <property type="protein sequence ID" value="AAZ61165.1"/>
    <property type="status" value="ALT_INIT"/>
    <property type="molecule type" value="Genomic_DNA"/>
</dbReference>
<dbReference type="SMR" id="Q470L8"/>
<dbReference type="STRING" id="264198.Reut_A1800"/>
<dbReference type="KEGG" id="reu:Reut_A1800"/>
<dbReference type="eggNOG" id="COG0027">
    <property type="taxonomic scope" value="Bacteria"/>
</dbReference>
<dbReference type="HOGENOM" id="CLU_011534_1_3_4"/>
<dbReference type="OrthoDB" id="9804625at2"/>
<dbReference type="UniPathway" id="UPA00074">
    <property type="reaction ID" value="UER00127"/>
</dbReference>
<dbReference type="GO" id="GO:0005829">
    <property type="term" value="C:cytosol"/>
    <property type="evidence" value="ECO:0007669"/>
    <property type="project" value="TreeGrafter"/>
</dbReference>
<dbReference type="GO" id="GO:0005524">
    <property type="term" value="F:ATP binding"/>
    <property type="evidence" value="ECO:0007669"/>
    <property type="project" value="UniProtKB-UniRule"/>
</dbReference>
<dbReference type="GO" id="GO:0000287">
    <property type="term" value="F:magnesium ion binding"/>
    <property type="evidence" value="ECO:0007669"/>
    <property type="project" value="InterPro"/>
</dbReference>
<dbReference type="GO" id="GO:0043815">
    <property type="term" value="F:phosphoribosylglycinamide formyltransferase 2 activity"/>
    <property type="evidence" value="ECO:0007669"/>
    <property type="project" value="UniProtKB-UniRule"/>
</dbReference>
<dbReference type="GO" id="GO:0004644">
    <property type="term" value="F:phosphoribosylglycinamide formyltransferase activity"/>
    <property type="evidence" value="ECO:0007669"/>
    <property type="project" value="InterPro"/>
</dbReference>
<dbReference type="GO" id="GO:0006189">
    <property type="term" value="P:'de novo' IMP biosynthetic process"/>
    <property type="evidence" value="ECO:0007669"/>
    <property type="project" value="UniProtKB-UniRule"/>
</dbReference>
<dbReference type="Gene3D" id="3.40.50.20">
    <property type="match status" value="1"/>
</dbReference>
<dbReference type="Gene3D" id="3.30.1490.20">
    <property type="entry name" value="ATP-grasp fold, A domain"/>
    <property type="match status" value="1"/>
</dbReference>
<dbReference type="Gene3D" id="3.30.470.20">
    <property type="entry name" value="ATP-grasp fold, B domain"/>
    <property type="match status" value="1"/>
</dbReference>
<dbReference type="HAMAP" id="MF_01643">
    <property type="entry name" value="PurT"/>
    <property type="match status" value="1"/>
</dbReference>
<dbReference type="InterPro" id="IPR011761">
    <property type="entry name" value="ATP-grasp"/>
</dbReference>
<dbReference type="InterPro" id="IPR003135">
    <property type="entry name" value="ATP-grasp_carboxylate-amine"/>
</dbReference>
<dbReference type="InterPro" id="IPR013815">
    <property type="entry name" value="ATP_grasp_subdomain_1"/>
</dbReference>
<dbReference type="InterPro" id="IPR016185">
    <property type="entry name" value="PreATP-grasp_dom_sf"/>
</dbReference>
<dbReference type="InterPro" id="IPR005862">
    <property type="entry name" value="PurT"/>
</dbReference>
<dbReference type="InterPro" id="IPR054350">
    <property type="entry name" value="PurT/PurK_preATP-grasp"/>
</dbReference>
<dbReference type="InterPro" id="IPR048740">
    <property type="entry name" value="PurT_C"/>
</dbReference>
<dbReference type="InterPro" id="IPR011054">
    <property type="entry name" value="Rudment_hybrid_motif"/>
</dbReference>
<dbReference type="NCBIfam" id="NF006766">
    <property type="entry name" value="PRK09288.1"/>
    <property type="match status" value="1"/>
</dbReference>
<dbReference type="NCBIfam" id="TIGR01142">
    <property type="entry name" value="purT"/>
    <property type="match status" value="1"/>
</dbReference>
<dbReference type="PANTHER" id="PTHR43055">
    <property type="entry name" value="FORMATE-DEPENDENT PHOSPHORIBOSYLGLYCINAMIDE FORMYLTRANSFERASE"/>
    <property type="match status" value="1"/>
</dbReference>
<dbReference type="PANTHER" id="PTHR43055:SF1">
    <property type="entry name" value="FORMATE-DEPENDENT PHOSPHORIBOSYLGLYCINAMIDE FORMYLTRANSFERASE"/>
    <property type="match status" value="1"/>
</dbReference>
<dbReference type="Pfam" id="PF02222">
    <property type="entry name" value="ATP-grasp"/>
    <property type="match status" value="1"/>
</dbReference>
<dbReference type="Pfam" id="PF21244">
    <property type="entry name" value="PurT_C"/>
    <property type="match status" value="1"/>
</dbReference>
<dbReference type="Pfam" id="PF22660">
    <property type="entry name" value="RS_preATP-grasp-like"/>
    <property type="match status" value="1"/>
</dbReference>
<dbReference type="SUPFAM" id="SSF56059">
    <property type="entry name" value="Glutathione synthetase ATP-binding domain-like"/>
    <property type="match status" value="1"/>
</dbReference>
<dbReference type="SUPFAM" id="SSF52440">
    <property type="entry name" value="PreATP-grasp domain"/>
    <property type="match status" value="1"/>
</dbReference>
<dbReference type="SUPFAM" id="SSF51246">
    <property type="entry name" value="Rudiment single hybrid motif"/>
    <property type="match status" value="1"/>
</dbReference>
<dbReference type="PROSITE" id="PS50975">
    <property type="entry name" value="ATP_GRASP"/>
    <property type="match status" value="1"/>
</dbReference>
<comment type="function">
    <text evidence="1">Involved in the de novo purine biosynthesis. Catalyzes the transfer of formate to 5-phospho-ribosyl-glycinamide (GAR), producing 5-phospho-ribosyl-N-formylglycinamide (FGAR). Formate is provided by PurU via hydrolysis of 10-formyl-tetrahydrofolate.</text>
</comment>
<comment type="catalytic activity">
    <reaction evidence="1">
        <text>N(1)-(5-phospho-beta-D-ribosyl)glycinamide + formate + ATP = N(2)-formyl-N(1)-(5-phospho-beta-D-ribosyl)glycinamide + ADP + phosphate + H(+)</text>
        <dbReference type="Rhea" id="RHEA:24829"/>
        <dbReference type="ChEBI" id="CHEBI:15378"/>
        <dbReference type="ChEBI" id="CHEBI:15740"/>
        <dbReference type="ChEBI" id="CHEBI:30616"/>
        <dbReference type="ChEBI" id="CHEBI:43474"/>
        <dbReference type="ChEBI" id="CHEBI:143788"/>
        <dbReference type="ChEBI" id="CHEBI:147286"/>
        <dbReference type="ChEBI" id="CHEBI:456216"/>
        <dbReference type="EC" id="6.3.1.21"/>
    </reaction>
    <physiologicalReaction direction="left-to-right" evidence="1">
        <dbReference type="Rhea" id="RHEA:24830"/>
    </physiologicalReaction>
</comment>
<comment type="pathway">
    <text evidence="1">Purine metabolism; IMP biosynthesis via de novo pathway; N(2)-formyl-N(1)-(5-phospho-D-ribosyl)glycinamide from N(1)-(5-phospho-D-ribosyl)glycinamide (formate route): step 1/1.</text>
</comment>
<comment type="subunit">
    <text evidence="1">Homodimer.</text>
</comment>
<comment type="similarity">
    <text evidence="1">Belongs to the PurK/PurT family.</text>
</comment>
<comment type="sequence caution" evidence="2">
    <conflict type="erroneous initiation">
        <sequence resource="EMBL-CDS" id="AAZ61165"/>
    </conflict>
</comment>
<proteinExistence type="inferred from homology"/>
<evidence type="ECO:0000255" key="1">
    <source>
        <dbReference type="HAMAP-Rule" id="MF_01643"/>
    </source>
</evidence>
<evidence type="ECO:0000305" key="2"/>
<organism>
    <name type="scientific">Cupriavidus pinatubonensis (strain JMP 134 / LMG 1197)</name>
    <name type="common">Cupriavidus necator (strain JMP 134)</name>
    <dbReference type="NCBI Taxonomy" id="264198"/>
    <lineage>
        <taxon>Bacteria</taxon>
        <taxon>Pseudomonadati</taxon>
        <taxon>Pseudomonadota</taxon>
        <taxon>Betaproteobacteria</taxon>
        <taxon>Burkholderiales</taxon>
        <taxon>Burkholderiaceae</taxon>
        <taxon>Cupriavidus</taxon>
    </lineage>
</organism>
<keyword id="KW-0067">ATP-binding</keyword>
<keyword id="KW-0436">Ligase</keyword>
<keyword id="KW-0460">Magnesium</keyword>
<keyword id="KW-0479">Metal-binding</keyword>
<keyword id="KW-0547">Nucleotide-binding</keyword>
<keyword id="KW-0658">Purine biosynthesis</keyword>
<accession>Q470L8</accession>
<protein>
    <recommendedName>
        <fullName evidence="1">Formate-dependent phosphoribosylglycinamide formyltransferase</fullName>
        <ecNumber evidence="1">6.3.1.21</ecNumber>
    </recommendedName>
    <alternativeName>
        <fullName evidence="1">5'-phosphoribosylglycinamide transformylase 2</fullName>
    </alternativeName>
    <alternativeName>
        <fullName evidence="1">Formate-dependent GAR transformylase</fullName>
    </alternativeName>
    <alternativeName>
        <fullName evidence="1">GAR transformylase 2</fullName>
        <shortName evidence="1">GART 2</shortName>
    </alternativeName>
    <alternativeName>
        <fullName evidence="1">Non-folate glycinamide ribonucleotide transformylase</fullName>
    </alternativeName>
    <alternativeName>
        <fullName evidence="1">Phosphoribosylglycinamide formyltransferase 2</fullName>
    </alternativeName>
</protein>
<name>PURT_CUPPJ</name>
<sequence>MTTIGTPLSPSATKVMLLGSGELGKEVLIALQRLGVETIAVDRYDNAPGQQVAHHARTIAMSDPEQLKALIEAEKPQLVVPEIEAIATPMLESLEAAGVVRVIPTARAARLTMDREGIRRLAAETLGLPTSPYKFCDSLEELQTAIDGGIGYPCVVKPVMSSSGKGQSKIDGPEGVKAAWDYAMAGGRVSHGRVIVEGFIDFDYEITLLTVRALGADGKVETQFCTPIGHVQVSGDYVESWQPHPMHPAALQTAQHIARAVTSDLGGQGLFGVELFVKGEQVWFSEVSPRPHDTGMVTMATQWQNEFELHARAILGLPVSTALKSPGASAVIYGGVDAQGVVFDGVDAALRVPQTEVRLFGKPESFAKRRMGVALAYADDVDTARQRAKEAAACVKPRVAG</sequence>
<gene>
    <name evidence="1" type="primary">purT</name>
    <name type="ordered locus">Reut_A1800</name>
</gene>